<evidence type="ECO:0000255" key="1">
    <source>
        <dbReference type="HAMAP-Rule" id="MF_01359"/>
    </source>
</evidence>
<accession>P57254</accession>
<keyword id="KW-0997">Cell inner membrane</keyword>
<keyword id="KW-1003">Cell membrane</keyword>
<keyword id="KW-0472">Membrane</keyword>
<keyword id="KW-0511">Multifunctional enzyme</keyword>
<keyword id="KW-0520">NAD</keyword>
<keyword id="KW-0874">Quinone</keyword>
<keyword id="KW-1185">Reference proteome</keyword>
<keyword id="KW-1278">Translocase</keyword>
<keyword id="KW-0813">Transport</keyword>
<keyword id="KW-0830">Ubiquinone</keyword>
<protein>
    <recommendedName>
        <fullName evidence="1">NADH-quinone oxidoreductase subunit C/D</fullName>
        <ecNumber evidence="1">7.1.1.-</ecNumber>
    </recommendedName>
    <alternativeName>
        <fullName evidence="1">NADH dehydrogenase I subunit C/D</fullName>
    </alternativeName>
    <alternativeName>
        <fullName evidence="1">NDH-1 subunit C/D</fullName>
    </alternativeName>
</protein>
<reference key="1">
    <citation type="journal article" date="2000" name="Nature">
        <title>Genome sequence of the endocellular bacterial symbiont of aphids Buchnera sp. APS.</title>
        <authorList>
            <person name="Shigenobu S."/>
            <person name="Watanabe H."/>
            <person name="Hattori M."/>
            <person name="Sakaki Y."/>
            <person name="Ishikawa H."/>
        </authorList>
    </citation>
    <scope>NUCLEOTIDE SEQUENCE [LARGE SCALE GENOMIC DNA]</scope>
    <source>
        <strain>APS</strain>
    </source>
</reference>
<feature type="chain" id="PRO_0000118681" description="NADH-quinone oxidoreductase subunit C/D">
    <location>
        <begin position="1"/>
        <end position="600"/>
    </location>
</feature>
<feature type="region of interest" description="NADH dehydrogenase I subunit C" evidence="1">
    <location>
        <begin position="1"/>
        <end position="190"/>
    </location>
</feature>
<feature type="region of interest" description="NADH dehydrogenase I subunit D" evidence="1">
    <location>
        <begin position="214"/>
        <end position="600"/>
    </location>
</feature>
<dbReference type="EC" id="7.1.1.-" evidence="1"/>
<dbReference type="EMBL" id="BA000003">
    <property type="protein sequence ID" value="BAB12874.1"/>
    <property type="molecule type" value="Genomic_DNA"/>
</dbReference>
<dbReference type="RefSeq" id="NP_239988.1">
    <property type="nucleotide sequence ID" value="NC_002528.1"/>
</dbReference>
<dbReference type="RefSeq" id="WP_010895975.1">
    <property type="nucleotide sequence ID" value="NC_002528.1"/>
</dbReference>
<dbReference type="SMR" id="P57254"/>
<dbReference type="STRING" id="563178.BUAP5A_154"/>
<dbReference type="EnsemblBacteria" id="BAB12874">
    <property type="protein sequence ID" value="BAB12874"/>
    <property type="gene ID" value="BAB12874"/>
</dbReference>
<dbReference type="KEGG" id="buc:BU156"/>
<dbReference type="PATRIC" id="fig|107806.10.peg.166"/>
<dbReference type="eggNOG" id="COG0649">
    <property type="taxonomic scope" value="Bacteria"/>
</dbReference>
<dbReference type="eggNOG" id="COG0852">
    <property type="taxonomic scope" value="Bacteria"/>
</dbReference>
<dbReference type="HOGENOM" id="CLU_015134_3_2_6"/>
<dbReference type="Proteomes" id="UP000001806">
    <property type="component" value="Chromosome"/>
</dbReference>
<dbReference type="GO" id="GO:0030964">
    <property type="term" value="C:NADH dehydrogenase complex"/>
    <property type="evidence" value="ECO:0007669"/>
    <property type="project" value="InterPro"/>
</dbReference>
<dbReference type="GO" id="GO:0005886">
    <property type="term" value="C:plasma membrane"/>
    <property type="evidence" value="ECO:0007669"/>
    <property type="project" value="UniProtKB-SubCell"/>
</dbReference>
<dbReference type="GO" id="GO:0051287">
    <property type="term" value="F:NAD binding"/>
    <property type="evidence" value="ECO:0007669"/>
    <property type="project" value="InterPro"/>
</dbReference>
<dbReference type="GO" id="GO:0008137">
    <property type="term" value="F:NADH dehydrogenase (ubiquinone) activity"/>
    <property type="evidence" value="ECO:0007669"/>
    <property type="project" value="InterPro"/>
</dbReference>
<dbReference type="GO" id="GO:0050136">
    <property type="term" value="F:NADH:ubiquinone reductase (non-electrogenic) activity"/>
    <property type="evidence" value="ECO:0007669"/>
    <property type="project" value="UniProtKB-UniRule"/>
</dbReference>
<dbReference type="GO" id="GO:0048038">
    <property type="term" value="F:quinone binding"/>
    <property type="evidence" value="ECO:0007669"/>
    <property type="project" value="UniProtKB-KW"/>
</dbReference>
<dbReference type="FunFam" id="1.10.645.10:FF:000001">
    <property type="entry name" value="NADH-quinone oxidoreductase subunit C/D"/>
    <property type="match status" value="1"/>
</dbReference>
<dbReference type="Gene3D" id="1.10.645.10">
    <property type="entry name" value="Cytochrome-c3 Hydrogenase, chain B"/>
    <property type="match status" value="1"/>
</dbReference>
<dbReference type="Gene3D" id="3.30.460.80">
    <property type="entry name" value="NADH:ubiquinone oxidoreductase, 30kDa subunit"/>
    <property type="match status" value="1"/>
</dbReference>
<dbReference type="HAMAP" id="MF_01359">
    <property type="entry name" value="NDH1_NuoCD_1"/>
    <property type="match status" value="1"/>
</dbReference>
<dbReference type="HAMAP" id="MF_01358">
    <property type="entry name" value="NDH1_NuoD"/>
    <property type="match status" value="1"/>
</dbReference>
<dbReference type="InterPro" id="IPR010218">
    <property type="entry name" value="NADH_DH_suC"/>
</dbReference>
<dbReference type="InterPro" id="IPR023062">
    <property type="entry name" value="NADH_DH_suCD"/>
</dbReference>
<dbReference type="InterPro" id="IPR001135">
    <property type="entry name" value="NADH_Q_OxRdtase_suD"/>
</dbReference>
<dbReference type="InterPro" id="IPR037232">
    <property type="entry name" value="NADH_quin_OxRdtase_su_C/D-like"/>
</dbReference>
<dbReference type="InterPro" id="IPR001268">
    <property type="entry name" value="NADH_UbQ_OxRdtase_30kDa_su"/>
</dbReference>
<dbReference type="InterPro" id="IPR014029">
    <property type="entry name" value="NADH_UbQ_OxRdtase_49kDa_CS"/>
</dbReference>
<dbReference type="InterPro" id="IPR022885">
    <property type="entry name" value="NDH1_su_D/H"/>
</dbReference>
<dbReference type="InterPro" id="IPR029014">
    <property type="entry name" value="NiFe-Hase_large"/>
</dbReference>
<dbReference type="NCBIfam" id="TIGR01961">
    <property type="entry name" value="NuoC_fam"/>
    <property type="match status" value="1"/>
</dbReference>
<dbReference type="NCBIfam" id="TIGR01962">
    <property type="entry name" value="NuoD"/>
    <property type="match status" value="1"/>
</dbReference>
<dbReference type="NCBIfam" id="NF004739">
    <property type="entry name" value="PRK06075.1"/>
    <property type="match status" value="1"/>
</dbReference>
<dbReference type="NCBIfam" id="NF008728">
    <property type="entry name" value="PRK11742.1"/>
    <property type="match status" value="1"/>
</dbReference>
<dbReference type="PANTHER" id="PTHR11993:SF45">
    <property type="entry name" value="NADH-QUINONE OXIDOREDUCTASE SUBUNIT C_D"/>
    <property type="match status" value="1"/>
</dbReference>
<dbReference type="PANTHER" id="PTHR11993">
    <property type="entry name" value="NADH-UBIQUINONE OXIDOREDUCTASE 49 KDA SUBUNIT"/>
    <property type="match status" value="1"/>
</dbReference>
<dbReference type="Pfam" id="PF00329">
    <property type="entry name" value="Complex1_30kDa"/>
    <property type="match status" value="1"/>
</dbReference>
<dbReference type="Pfam" id="PF00346">
    <property type="entry name" value="Complex1_49kDa"/>
    <property type="match status" value="1"/>
</dbReference>
<dbReference type="SUPFAM" id="SSF56762">
    <property type="entry name" value="HydB/Nqo4-like"/>
    <property type="match status" value="1"/>
</dbReference>
<dbReference type="SUPFAM" id="SSF143243">
    <property type="entry name" value="Nqo5-like"/>
    <property type="match status" value="1"/>
</dbReference>
<dbReference type="PROSITE" id="PS00535">
    <property type="entry name" value="COMPLEX1_49K"/>
    <property type="match status" value="1"/>
</dbReference>
<comment type="function">
    <text evidence="1">NDH-1 shuttles electrons from NADH, via FMN and iron-sulfur (Fe-S) centers, to quinones in the respiratory chain. The immediate electron acceptor for the enzyme in this species is believed to be ubiquinone. Couples the redox reaction to proton translocation (for every two electrons transferred, four hydrogen ions are translocated across the cytoplasmic membrane), and thus conserves the redox energy in a proton gradient.</text>
</comment>
<comment type="catalytic activity">
    <reaction evidence="1">
        <text>a quinone + NADH + 5 H(+)(in) = a quinol + NAD(+) + 4 H(+)(out)</text>
        <dbReference type="Rhea" id="RHEA:57888"/>
        <dbReference type="ChEBI" id="CHEBI:15378"/>
        <dbReference type="ChEBI" id="CHEBI:24646"/>
        <dbReference type="ChEBI" id="CHEBI:57540"/>
        <dbReference type="ChEBI" id="CHEBI:57945"/>
        <dbReference type="ChEBI" id="CHEBI:132124"/>
    </reaction>
</comment>
<comment type="subunit">
    <text evidence="1">NDH-1 is composed of 13 different subunits. Subunits NuoB, CD, E, F, and G constitute the peripheral sector of the complex.</text>
</comment>
<comment type="subcellular location">
    <subcellularLocation>
        <location evidence="1">Cell inner membrane</location>
        <topology evidence="1">Peripheral membrane protein</topology>
        <orientation evidence="1">Cytoplasmic side</orientation>
    </subcellularLocation>
</comment>
<comment type="similarity">
    <text evidence="1">In the N-terminal section; belongs to the complex I 30 kDa subunit family.</text>
</comment>
<comment type="similarity">
    <text evidence="1">In the C-terminal section; belongs to the complex I 49 kDa subunit family.</text>
</comment>
<proteinExistence type="inferred from homology"/>
<sequence>MIDLMPKKNTFLLKKKYKEDSNNSVINNLFDFFGKEFCFHQITLTGFPIIWIDKTLLIEVGKFLYHLSQPYIMLYDLHGVDERIRLHREDLPKADFSVFYHLISIERNSDIMIKVPLLENDLILPTFTGLFPNANWYERETWDMFGIIFNNHPNLTRIIMPSTWKGHPLRKNYSARATEYEPFFLNEQKEDLEMEGLKFKPELWGMKRKNDNVEFMFLNLGPNHPSAHGAFRIVLQLDGENIVDCVPDIGYHHRGAEKMAERQSWHSYIPYTDRIEYLGGCVNELPYVLAVEKLANISVPEKAEVIRVMMSELFRINSHLLYISTFIQDVGCMTPVFFAFTDRQKIYDLIEAITGARMHPAWFRIGGVANDLPQGWNILLKEFLDWMPKRLKYYINTALKNSILIHRSKGIAEYNKKEALQWGVTGAGLRATGLNFDVRKWRPYSGYQNYTFEVPVGSGISDCYSRVMIKVEEIYQSLFILKQCLCNMPSGPFKSEDSLTTPPSKECVLQNIETMITHFLQVSWGPVIPENESFQMIEATKGINSYYLISDGGTMSYRTRIRTPSFPHLQQIPSVIRGSLISDLIVYLGSIDFVMSDVDR</sequence>
<name>NUOCD_BUCAI</name>
<organism>
    <name type="scientific">Buchnera aphidicola subsp. Acyrthosiphon pisum (strain APS)</name>
    <name type="common">Acyrthosiphon pisum symbiotic bacterium</name>
    <dbReference type="NCBI Taxonomy" id="107806"/>
    <lineage>
        <taxon>Bacteria</taxon>
        <taxon>Pseudomonadati</taxon>
        <taxon>Pseudomonadota</taxon>
        <taxon>Gammaproteobacteria</taxon>
        <taxon>Enterobacterales</taxon>
        <taxon>Erwiniaceae</taxon>
        <taxon>Buchnera</taxon>
    </lineage>
</organism>
<gene>
    <name evidence="1" type="primary">nuoC</name>
    <name evidence="1" type="synonym">nuoCD</name>
    <name evidence="1" type="synonym">nuoD</name>
    <name type="ordered locus">BU156</name>
</gene>